<protein>
    <recommendedName>
        <fullName>Uncharacterized protein C2C4.05</fullName>
    </recommendedName>
</protein>
<name>YEY5_SCHPO</name>
<accession>O14038</accession>
<accession>Q9UU34</accession>
<gene>
    <name type="ORF">SPAC2C4.05</name>
</gene>
<reference key="1">
    <citation type="journal article" date="2002" name="Nature">
        <title>The genome sequence of Schizosaccharomyces pombe.</title>
        <authorList>
            <person name="Wood V."/>
            <person name="Gwilliam R."/>
            <person name="Rajandream M.A."/>
            <person name="Lyne M.H."/>
            <person name="Lyne R."/>
            <person name="Stewart A."/>
            <person name="Sgouros J.G."/>
            <person name="Peat N."/>
            <person name="Hayles J."/>
            <person name="Baker S.G."/>
            <person name="Basham D."/>
            <person name="Bowman S."/>
            <person name="Brooks K."/>
            <person name="Brown D."/>
            <person name="Brown S."/>
            <person name="Chillingworth T."/>
            <person name="Churcher C.M."/>
            <person name="Collins M."/>
            <person name="Connor R."/>
            <person name="Cronin A."/>
            <person name="Davis P."/>
            <person name="Feltwell T."/>
            <person name="Fraser A."/>
            <person name="Gentles S."/>
            <person name="Goble A."/>
            <person name="Hamlin N."/>
            <person name="Harris D.E."/>
            <person name="Hidalgo J."/>
            <person name="Hodgson G."/>
            <person name="Holroyd S."/>
            <person name="Hornsby T."/>
            <person name="Howarth S."/>
            <person name="Huckle E.J."/>
            <person name="Hunt S."/>
            <person name="Jagels K."/>
            <person name="James K.D."/>
            <person name="Jones L."/>
            <person name="Jones M."/>
            <person name="Leather S."/>
            <person name="McDonald S."/>
            <person name="McLean J."/>
            <person name="Mooney P."/>
            <person name="Moule S."/>
            <person name="Mungall K.L."/>
            <person name="Murphy L.D."/>
            <person name="Niblett D."/>
            <person name="Odell C."/>
            <person name="Oliver K."/>
            <person name="O'Neil S."/>
            <person name="Pearson D."/>
            <person name="Quail M.A."/>
            <person name="Rabbinowitsch E."/>
            <person name="Rutherford K.M."/>
            <person name="Rutter S."/>
            <person name="Saunders D."/>
            <person name="Seeger K."/>
            <person name="Sharp S."/>
            <person name="Skelton J."/>
            <person name="Simmonds M.N."/>
            <person name="Squares R."/>
            <person name="Squares S."/>
            <person name="Stevens K."/>
            <person name="Taylor K."/>
            <person name="Taylor R.G."/>
            <person name="Tivey A."/>
            <person name="Walsh S.V."/>
            <person name="Warren T."/>
            <person name="Whitehead S."/>
            <person name="Woodward J.R."/>
            <person name="Volckaert G."/>
            <person name="Aert R."/>
            <person name="Robben J."/>
            <person name="Grymonprez B."/>
            <person name="Weltjens I."/>
            <person name="Vanstreels E."/>
            <person name="Rieger M."/>
            <person name="Schaefer M."/>
            <person name="Mueller-Auer S."/>
            <person name="Gabel C."/>
            <person name="Fuchs M."/>
            <person name="Duesterhoeft A."/>
            <person name="Fritzc C."/>
            <person name="Holzer E."/>
            <person name="Moestl D."/>
            <person name="Hilbert H."/>
            <person name="Borzym K."/>
            <person name="Langer I."/>
            <person name="Beck A."/>
            <person name="Lehrach H."/>
            <person name="Reinhardt R."/>
            <person name="Pohl T.M."/>
            <person name="Eger P."/>
            <person name="Zimmermann W."/>
            <person name="Wedler H."/>
            <person name="Wambutt R."/>
            <person name="Purnelle B."/>
            <person name="Goffeau A."/>
            <person name="Cadieu E."/>
            <person name="Dreano S."/>
            <person name="Gloux S."/>
            <person name="Lelaure V."/>
            <person name="Mottier S."/>
            <person name="Galibert F."/>
            <person name="Aves S.J."/>
            <person name="Xiang Z."/>
            <person name="Hunt C."/>
            <person name="Moore K."/>
            <person name="Hurst S.M."/>
            <person name="Lucas M."/>
            <person name="Rochet M."/>
            <person name="Gaillardin C."/>
            <person name="Tallada V.A."/>
            <person name="Garzon A."/>
            <person name="Thode G."/>
            <person name="Daga R.R."/>
            <person name="Cruzado L."/>
            <person name="Jimenez J."/>
            <person name="Sanchez M."/>
            <person name="del Rey F."/>
            <person name="Benito J."/>
            <person name="Dominguez A."/>
            <person name="Revuelta J.L."/>
            <person name="Moreno S."/>
            <person name="Armstrong J."/>
            <person name="Forsburg S.L."/>
            <person name="Cerutti L."/>
            <person name="Lowe T."/>
            <person name="McCombie W.R."/>
            <person name="Paulsen I."/>
            <person name="Potashkin J."/>
            <person name="Shpakovski G.V."/>
            <person name="Ussery D."/>
            <person name="Barrell B.G."/>
            <person name="Nurse P."/>
        </authorList>
    </citation>
    <scope>NUCLEOTIDE SEQUENCE [LARGE SCALE GENOMIC DNA]</scope>
    <source>
        <strain>972 / ATCC 24843</strain>
    </source>
</reference>
<reference key="2">
    <citation type="journal article" date="2000" name="Genes Cells">
        <title>Large-scale screening of intracellular protein localization in living fission yeast cells by the use of a GFP-fusion genomic DNA library.</title>
        <authorList>
            <person name="Ding D.-Q."/>
            <person name="Tomita Y."/>
            <person name="Yamamoto A."/>
            <person name="Chikashige Y."/>
            <person name="Haraguchi T."/>
            <person name="Hiraoka Y."/>
        </authorList>
    </citation>
    <scope>NUCLEOTIDE SEQUENCE [LARGE SCALE GENOMIC DNA] OF 42-70</scope>
    <scope>SUBCELLULAR LOCATION</scope>
    <source>
        <strain>ATCC 38364 / 968</strain>
    </source>
</reference>
<reference key="3">
    <citation type="journal article" date="2006" name="Nat. Biotechnol.">
        <title>ORFeome cloning and global analysis of protein localization in the fission yeast Schizosaccharomyces pombe.</title>
        <authorList>
            <person name="Matsuyama A."/>
            <person name="Arai R."/>
            <person name="Yashiroda Y."/>
            <person name="Shirai A."/>
            <person name="Kamata A."/>
            <person name="Sekido S."/>
            <person name="Kobayashi Y."/>
            <person name="Hashimoto A."/>
            <person name="Hamamoto M."/>
            <person name="Hiraoka Y."/>
            <person name="Horinouchi S."/>
            <person name="Yoshida M."/>
        </authorList>
    </citation>
    <scope>SUBCELLULAR LOCATION [LARGE SCALE ANALYSIS]</scope>
</reference>
<proteinExistence type="inferred from homology"/>
<keyword id="KW-0256">Endoplasmic reticulum</keyword>
<keyword id="KW-0472">Membrane</keyword>
<keyword id="KW-1185">Reference proteome</keyword>
<keyword id="KW-0812">Transmembrane</keyword>
<keyword id="KW-1133">Transmembrane helix</keyword>
<organism>
    <name type="scientific">Schizosaccharomyces pombe (strain 972 / ATCC 24843)</name>
    <name type="common">Fission yeast</name>
    <dbReference type="NCBI Taxonomy" id="284812"/>
    <lineage>
        <taxon>Eukaryota</taxon>
        <taxon>Fungi</taxon>
        <taxon>Dikarya</taxon>
        <taxon>Ascomycota</taxon>
        <taxon>Taphrinomycotina</taxon>
        <taxon>Schizosaccharomycetes</taxon>
        <taxon>Schizosaccharomycetales</taxon>
        <taxon>Schizosaccharomycetaceae</taxon>
        <taxon>Schizosaccharomyces</taxon>
    </lineage>
</organism>
<comment type="subcellular location">
    <subcellularLocation>
        <location evidence="2 3">Endoplasmic reticulum membrane</location>
        <topology evidence="2 3">Multi-pass membrane protein</topology>
    </subcellularLocation>
</comment>
<comment type="similarity">
    <text evidence="4">Belongs to the cornichon family.</text>
</comment>
<sequence length="134" mass="15738">MVSAWIYFTSLMLTCANIMLQMYFTVMYSDLKDDFINPIDLSRKLNWYVLPEMGFQAFSALLLLLSGAWITFLLNVPMLAWNAKMIMSNTHMHDSTTIFKDVSSRQKRSFFKLACFAVFFFVYLFLFVSRLVDE</sequence>
<feature type="chain" id="PRO_0000122238" description="Uncharacterized protein C2C4.05">
    <location>
        <begin position="1"/>
        <end position="134"/>
    </location>
</feature>
<feature type="transmembrane region" description="Helical" evidence="1">
    <location>
        <begin position="8"/>
        <end position="28"/>
    </location>
</feature>
<feature type="transmembrane region" description="Helical" evidence="1">
    <location>
        <begin position="54"/>
        <end position="74"/>
    </location>
</feature>
<feature type="transmembrane region" description="Helical" evidence="1">
    <location>
        <begin position="113"/>
        <end position="133"/>
    </location>
</feature>
<dbReference type="EMBL" id="CU329670">
    <property type="protein sequence ID" value="CAB16365.1"/>
    <property type="molecule type" value="Genomic_DNA"/>
</dbReference>
<dbReference type="EMBL" id="AB027841">
    <property type="protein sequence ID" value="BAA87145.1"/>
    <property type="molecule type" value="Genomic_DNA"/>
</dbReference>
<dbReference type="PIR" id="T38516">
    <property type="entry name" value="T38516"/>
</dbReference>
<dbReference type="SMR" id="O14038"/>
<dbReference type="BioGRID" id="279093">
    <property type="interactions" value="7"/>
</dbReference>
<dbReference type="FunCoup" id="O14038">
    <property type="interactions" value="221"/>
</dbReference>
<dbReference type="STRING" id="284812.O14038"/>
<dbReference type="PaxDb" id="4896-SPAC2C4.05.1"/>
<dbReference type="EnsemblFungi" id="SPAC2C4.05.1">
    <property type="protein sequence ID" value="SPAC2C4.05.1:pep"/>
    <property type="gene ID" value="SPAC2C4.05"/>
</dbReference>
<dbReference type="KEGG" id="spo:2542639"/>
<dbReference type="PomBase" id="SPAC2C4.05"/>
<dbReference type="VEuPathDB" id="FungiDB:SPAC2C4.05"/>
<dbReference type="eggNOG" id="KOG2729">
    <property type="taxonomic scope" value="Eukaryota"/>
</dbReference>
<dbReference type="HOGENOM" id="CLU_112942_0_1_1"/>
<dbReference type="InParanoid" id="O14038"/>
<dbReference type="OMA" id="YTVICVD"/>
<dbReference type="PhylomeDB" id="O14038"/>
<dbReference type="PRO" id="PR:O14038"/>
<dbReference type="Proteomes" id="UP000002485">
    <property type="component" value="Chromosome I"/>
</dbReference>
<dbReference type="GO" id="GO:0030134">
    <property type="term" value="C:COPII-coated ER to Golgi transport vesicle"/>
    <property type="evidence" value="ECO:0000318"/>
    <property type="project" value="GO_Central"/>
</dbReference>
<dbReference type="GO" id="GO:0005783">
    <property type="term" value="C:endoplasmic reticulum"/>
    <property type="evidence" value="ECO:0007005"/>
    <property type="project" value="PomBase"/>
</dbReference>
<dbReference type="GO" id="GO:0005789">
    <property type="term" value="C:endoplasmic reticulum membrane"/>
    <property type="evidence" value="ECO:0000318"/>
    <property type="project" value="GO_Central"/>
</dbReference>
<dbReference type="GO" id="GO:0005102">
    <property type="term" value="F:signaling receptor binding"/>
    <property type="evidence" value="ECO:0000318"/>
    <property type="project" value="GO_Central"/>
</dbReference>
<dbReference type="GO" id="GO:0006888">
    <property type="term" value="P:endoplasmic reticulum to Golgi vesicle-mediated transport"/>
    <property type="evidence" value="ECO:0000318"/>
    <property type="project" value="GO_Central"/>
</dbReference>
<dbReference type="GO" id="GO:0006886">
    <property type="term" value="P:intracellular protein transport"/>
    <property type="evidence" value="ECO:0000305"/>
    <property type="project" value="PomBase"/>
</dbReference>
<dbReference type="InterPro" id="IPR003377">
    <property type="entry name" value="Cornichon"/>
</dbReference>
<dbReference type="InterPro" id="IPR033466">
    <property type="entry name" value="Cornichon_conserved"/>
</dbReference>
<dbReference type="PANTHER" id="PTHR12290">
    <property type="entry name" value="CORNICHON-RELATED"/>
    <property type="match status" value="1"/>
</dbReference>
<dbReference type="Pfam" id="PF03311">
    <property type="entry name" value="Cornichon"/>
    <property type="match status" value="1"/>
</dbReference>
<dbReference type="SMART" id="SM01398">
    <property type="entry name" value="Cornichon"/>
    <property type="match status" value="1"/>
</dbReference>
<dbReference type="PROSITE" id="PS01340">
    <property type="entry name" value="CORNICHON"/>
    <property type="match status" value="1"/>
</dbReference>
<evidence type="ECO:0000255" key="1"/>
<evidence type="ECO:0000269" key="2">
    <source>
    </source>
</evidence>
<evidence type="ECO:0000269" key="3">
    <source>
    </source>
</evidence>
<evidence type="ECO:0000305" key="4"/>